<organism>
    <name type="scientific">Saccharomyces cerevisiae (strain ATCC 204508 / S288c)</name>
    <name type="common">Baker's yeast</name>
    <dbReference type="NCBI Taxonomy" id="559292"/>
    <lineage>
        <taxon>Eukaryota</taxon>
        <taxon>Fungi</taxon>
        <taxon>Dikarya</taxon>
        <taxon>Ascomycota</taxon>
        <taxon>Saccharomycotina</taxon>
        <taxon>Saccharomycetes</taxon>
        <taxon>Saccharomycetales</taxon>
        <taxon>Saccharomycetaceae</taxon>
        <taxon>Saccharomyces</taxon>
    </lineage>
</organism>
<sequence length="63" mass="6937">MHSLKGDFVSNNVTISHCHLPLSPATAIAIIICFRIVTDLKLSRLTYAFYLPGPISFLPVIPI</sequence>
<name>YL402_YEAST</name>
<comment type="subcellular location">
    <subcellularLocation>
        <location evidence="2">Membrane</location>
        <topology evidence="2">Single-pass membrane protein</topology>
    </subcellularLocation>
</comment>
<comment type="caution">
    <text evidence="3">Product of a dubious gene prediction unlikely to encode a functional protein. Because of that it is not part of the S.cerevisiae S288c complete/reference proteome set.</text>
</comment>
<comment type="sequence caution" evidence="2">
    <conflict type="erroneous initiation">
        <sequence resource="EMBL-CDS" id="AAB82344"/>
    </conflict>
    <text>Extended N-terminus.</text>
</comment>
<accession>Q06057</accession>
<feature type="chain" id="PRO_0000299647" description="Putative uncharacterized protein YLR402W">
    <location>
        <begin position="1"/>
        <end position="63"/>
    </location>
</feature>
<feature type="transmembrane region" description="Helical" evidence="1">
    <location>
        <begin position="15"/>
        <end position="37"/>
    </location>
</feature>
<protein>
    <recommendedName>
        <fullName>Putative uncharacterized protein YLR402W</fullName>
    </recommendedName>
</protein>
<keyword id="KW-0472">Membrane</keyword>
<keyword id="KW-0812">Transmembrane</keyword>
<keyword id="KW-1133">Transmembrane helix</keyword>
<reference key="1">
    <citation type="journal article" date="1997" name="Nature">
        <title>The nucleotide sequence of Saccharomyces cerevisiae chromosome XII.</title>
        <authorList>
            <person name="Johnston M."/>
            <person name="Hillier L.W."/>
            <person name="Riles L."/>
            <person name="Albermann K."/>
            <person name="Andre B."/>
            <person name="Ansorge W."/>
            <person name="Benes V."/>
            <person name="Brueckner M."/>
            <person name="Delius H."/>
            <person name="Dubois E."/>
            <person name="Duesterhoeft A."/>
            <person name="Entian K.-D."/>
            <person name="Floeth M."/>
            <person name="Goffeau A."/>
            <person name="Hebling U."/>
            <person name="Heumann K."/>
            <person name="Heuss-Neitzel D."/>
            <person name="Hilbert H."/>
            <person name="Hilger F."/>
            <person name="Kleine K."/>
            <person name="Koetter P."/>
            <person name="Louis E.J."/>
            <person name="Messenguy F."/>
            <person name="Mewes H.-W."/>
            <person name="Miosga T."/>
            <person name="Moestl D."/>
            <person name="Mueller-Auer S."/>
            <person name="Nentwich U."/>
            <person name="Obermaier B."/>
            <person name="Piravandi E."/>
            <person name="Pohl T.M."/>
            <person name="Portetelle D."/>
            <person name="Purnelle B."/>
            <person name="Rechmann S."/>
            <person name="Rieger M."/>
            <person name="Rinke M."/>
            <person name="Rose M."/>
            <person name="Scharfe M."/>
            <person name="Scherens B."/>
            <person name="Scholler P."/>
            <person name="Schwager C."/>
            <person name="Schwarz S."/>
            <person name="Underwood A.P."/>
            <person name="Urrestarazu L.A."/>
            <person name="Vandenbol M."/>
            <person name="Verhasselt P."/>
            <person name="Vierendeels F."/>
            <person name="Voet M."/>
            <person name="Volckaert G."/>
            <person name="Voss H."/>
            <person name="Wambutt R."/>
            <person name="Wedler E."/>
            <person name="Wedler H."/>
            <person name="Zimmermann F.K."/>
            <person name="Zollner A."/>
            <person name="Hani J."/>
            <person name="Hoheisel J.D."/>
        </authorList>
    </citation>
    <scope>NUCLEOTIDE SEQUENCE [LARGE SCALE GENOMIC DNA]</scope>
    <source>
        <strain>ATCC 204508 / S288c</strain>
    </source>
</reference>
<reference key="2">
    <citation type="journal article" date="2014" name="G3 (Bethesda)">
        <title>The reference genome sequence of Saccharomyces cerevisiae: Then and now.</title>
        <authorList>
            <person name="Engel S.R."/>
            <person name="Dietrich F.S."/>
            <person name="Fisk D.G."/>
            <person name="Binkley G."/>
            <person name="Balakrishnan R."/>
            <person name="Costanzo M.C."/>
            <person name="Dwight S.S."/>
            <person name="Hitz B.C."/>
            <person name="Karra K."/>
            <person name="Nash R.S."/>
            <person name="Weng S."/>
            <person name="Wong E.D."/>
            <person name="Lloyd P."/>
            <person name="Skrzypek M.S."/>
            <person name="Miyasato S.R."/>
            <person name="Simison M."/>
            <person name="Cherry J.M."/>
        </authorList>
    </citation>
    <scope>GENOME REANNOTATION</scope>
    <scope>SEQUENCE REVISION TO N-TERMINUS</scope>
    <source>
        <strain>ATCC 204508 / S288c</strain>
    </source>
</reference>
<gene>
    <name type="ordered locus">YLR402W</name>
    <name type="ORF">L8084.5</name>
</gene>
<proteinExistence type="uncertain"/>
<dbReference type="EMBL" id="U19729">
    <property type="protein sequence ID" value="AAB82344.1"/>
    <property type="status" value="ALT_INIT"/>
    <property type="molecule type" value="Genomic_DNA"/>
</dbReference>
<dbReference type="PIR" id="S55958">
    <property type="entry name" value="S55958"/>
</dbReference>
<dbReference type="STRING" id="4932.YLR402W"/>
<dbReference type="PaxDb" id="4932-YLR402W"/>
<dbReference type="EnsemblFungi" id="YLR402W_mRNA">
    <property type="protein sequence ID" value="YLR402W"/>
    <property type="gene ID" value="YLR402W"/>
</dbReference>
<dbReference type="AGR" id="SGD:S000004394"/>
<dbReference type="SGD" id="S000004394">
    <property type="gene designation" value="YLR402W"/>
</dbReference>
<dbReference type="HOGENOM" id="CLU_2887550_0_0_1"/>
<dbReference type="GO" id="GO:0016020">
    <property type="term" value="C:membrane"/>
    <property type="evidence" value="ECO:0007669"/>
    <property type="project" value="UniProtKB-SubCell"/>
</dbReference>
<evidence type="ECO:0000255" key="1"/>
<evidence type="ECO:0000305" key="2"/>
<evidence type="ECO:0000305" key="3">
    <source>
    </source>
</evidence>